<proteinExistence type="inferred from homology"/>
<feature type="chain" id="PRO_0000296315" description="Non-structural protein 4">
    <location>
        <begin position="1"/>
        <end position="128"/>
    </location>
</feature>
<feature type="transmembrane region" description="Helical" evidence="1">
    <location>
        <begin position="12"/>
        <end position="32"/>
    </location>
</feature>
<comment type="subcellular location">
    <subcellularLocation>
        <location evidence="2">Host membrane</location>
        <topology evidence="2">Single-pass membrane protein</topology>
    </subcellularLocation>
</comment>
<comment type="similarity">
    <text evidence="2">Belongs to the coronaviruses ns4/ns4.8 protein family.</text>
</comment>
<comment type="sequence caution" evidence="2">
    <conflict type="frameshift">
        <sequence resource="EMBL" id="AF029248"/>
    </conflict>
</comment>
<dbReference type="EMBL" id="AF029248">
    <property type="status" value="NOT_ANNOTATED_CDS"/>
    <property type="molecule type" value="Genomic_RNA"/>
</dbReference>
<dbReference type="SMR" id="P0C5A8"/>
<dbReference type="Proteomes" id="UP000007192">
    <property type="component" value="Segment"/>
</dbReference>
<dbReference type="GO" id="GO:0033644">
    <property type="term" value="C:host cell membrane"/>
    <property type="evidence" value="ECO:0007669"/>
    <property type="project" value="UniProtKB-SubCell"/>
</dbReference>
<dbReference type="GO" id="GO:0016020">
    <property type="term" value="C:membrane"/>
    <property type="evidence" value="ECO:0007669"/>
    <property type="project" value="UniProtKB-KW"/>
</dbReference>
<dbReference type="InterPro" id="IPR005603">
    <property type="entry name" value="Corona_NS4"/>
</dbReference>
<dbReference type="Pfam" id="PF03905">
    <property type="entry name" value="Corona_NS4"/>
    <property type="match status" value="1"/>
</dbReference>
<evidence type="ECO:0000255" key="1"/>
<evidence type="ECO:0000305" key="2"/>
<keyword id="KW-1043">Host membrane</keyword>
<keyword id="KW-0472">Membrane</keyword>
<keyword id="KW-1185">Reference proteome</keyword>
<keyword id="KW-0812">Transmembrane</keyword>
<keyword id="KW-1133">Transmembrane helix</keyword>
<organism>
    <name type="scientific">Murine coronavirus (strain A59)</name>
    <name type="common">MHV-A59</name>
    <name type="synonym">Murine hepatitis virus</name>
    <dbReference type="NCBI Taxonomy" id="11142"/>
    <lineage>
        <taxon>Viruses</taxon>
        <taxon>Riboviria</taxon>
        <taxon>Orthornavirae</taxon>
        <taxon>Pisuviricota</taxon>
        <taxon>Pisoniviricetes</taxon>
        <taxon>Nidovirales</taxon>
        <taxon>Cornidovirineae</taxon>
        <taxon>Coronaviridae</taxon>
        <taxon>Orthocoronavirinae</taxon>
        <taxon>Betacoronavirus</taxon>
        <taxon>Embecovirus</taxon>
        <taxon>Murine coronavirus</taxon>
    </lineage>
</organism>
<accession>P0C5A8</accession>
<protein>
    <recommendedName>
        <fullName>Non-structural protein 4</fullName>
        <shortName>ns4</shortName>
    </recommendedName>
    <alternativeName>
        <fullName>Accessory protein 4</fullName>
    </alternativeName>
</protein>
<sequence>MAVLGPKATLAAVFIGPFIVACMLGIGLVYLLQLQVQIFHVKDTIRVTGKPATVSYTTSTPVTPSATTLDGTTYTLIRPTSSYTRVYLGTPRGFDYSTFGPKTLDYVTNLNLILILVVHILLRHCPGI</sequence>
<gene>
    <name type="ORF">4</name>
</gene>
<organismHost>
    <name type="scientific">Mus musculus</name>
    <name type="common">Mouse</name>
    <dbReference type="NCBI Taxonomy" id="10090"/>
</organismHost>
<name>NS4_CVMA5</name>
<reference key="1">
    <citation type="journal article" date="1997" name="Virology">
        <title>Altered pathogenesis of a mutant of the murine coronavirus MHV-A59 is associated with a Q159L amino acid substitution in the spike protein.</title>
        <authorList>
            <person name="Leparc-Goffart I."/>
            <person name="Hingley S.T."/>
            <person name="Chua M.M."/>
            <person name="Jiang X."/>
            <person name="Lavi E."/>
            <person name="Weiss S.R."/>
        </authorList>
    </citation>
    <scope>NUCLEOTIDE SEQUENCE [GENOMIC RNA]</scope>
    <source>
        <strain>Isolate C12 mutant</strain>
    </source>
</reference>